<proteinExistence type="evidence at transcript level"/>
<evidence type="ECO:0000250" key="1">
    <source>
        <dbReference type="UniProtKB" id="Q96NJ6"/>
    </source>
</evidence>
<evidence type="ECO:0000255" key="2">
    <source>
        <dbReference type="PROSITE-ProRule" id="PRU00042"/>
    </source>
</evidence>
<evidence type="ECO:0000256" key="3">
    <source>
        <dbReference type="SAM" id="MobiDB-lite"/>
    </source>
</evidence>
<evidence type="ECO:0000305" key="4"/>
<protein>
    <recommendedName>
        <fullName>Zinc finger protein 3</fullName>
        <shortName>Zfp-3</shortName>
    </recommendedName>
</protein>
<comment type="function">
    <text>May be involved in transcriptional regulation.</text>
</comment>
<comment type="subcellular location">
    <subcellularLocation>
        <location evidence="4">Nucleus</location>
    </subcellularLocation>
</comment>
<comment type="similarity">
    <text evidence="4">Belongs to the krueppel C2H2-type zinc-finger protein family.</text>
</comment>
<organism>
    <name type="scientific">Mus musculus</name>
    <name type="common">Mouse</name>
    <dbReference type="NCBI Taxonomy" id="10090"/>
    <lineage>
        <taxon>Eukaryota</taxon>
        <taxon>Metazoa</taxon>
        <taxon>Chordata</taxon>
        <taxon>Craniata</taxon>
        <taxon>Vertebrata</taxon>
        <taxon>Euteleostomi</taxon>
        <taxon>Mammalia</taxon>
        <taxon>Eutheria</taxon>
        <taxon>Euarchontoglires</taxon>
        <taxon>Glires</taxon>
        <taxon>Rodentia</taxon>
        <taxon>Myomorpha</taxon>
        <taxon>Muroidea</taxon>
        <taxon>Muridae</taxon>
        <taxon>Murinae</taxon>
        <taxon>Mus</taxon>
        <taxon>Mus</taxon>
    </lineage>
</organism>
<gene>
    <name type="primary">Zfp3</name>
</gene>
<accession>Q8BLB0</accession>
<reference key="1">
    <citation type="journal article" date="2005" name="Science">
        <title>The transcriptional landscape of the mammalian genome.</title>
        <authorList>
            <person name="Carninci P."/>
            <person name="Kasukawa T."/>
            <person name="Katayama S."/>
            <person name="Gough J."/>
            <person name="Frith M.C."/>
            <person name="Maeda N."/>
            <person name="Oyama R."/>
            <person name="Ravasi T."/>
            <person name="Lenhard B."/>
            <person name="Wells C."/>
            <person name="Kodzius R."/>
            <person name="Shimokawa K."/>
            <person name="Bajic V.B."/>
            <person name="Brenner S.E."/>
            <person name="Batalov S."/>
            <person name="Forrest A.R."/>
            <person name="Zavolan M."/>
            <person name="Davis M.J."/>
            <person name="Wilming L.G."/>
            <person name="Aidinis V."/>
            <person name="Allen J.E."/>
            <person name="Ambesi-Impiombato A."/>
            <person name="Apweiler R."/>
            <person name="Aturaliya R.N."/>
            <person name="Bailey T.L."/>
            <person name="Bansal M."/>
            <person name="Baxter L."/>
            <person name="Beisel K.W."/>
            <person name="Bersano T."/>
            <person name="Bono H."/>
            <person name="Chalk A.M."/>
            <person name="Chiu K.P."/>
            <person name="Choudhary V."/>
            <person name="Christoffels A."/>
            <person name="Clutterbuck D.R."/>
            <person name="Crowe M.L."/>
            <person name="Dalla E."/>
            <person name="Dalrymple B.P."/>
            <person name="de Bono B."/>
            <person name="Della Gatta G."/>
            <person name="di Bernardo D."/>
            <person name="Down T."/>
            <person name="Engstrom P."/>
            <person name="Fagiolini M."/>
            <person name="Faulkner G."/>
            <person name="Fletcher C.F."/>
            <person name="Fukushima T."/>
            <person name="Furuno M."/>
            <person name="Futaki S."/>
            <person name="Gariboldi M."/>
            <person name="Georgii-Hemming P."/>
            <person name="Gingeras T.R."/>
            <person name="Gojobori T."/>
            <person name="Green R.E."/>
            <person name="Gustincich S."/>
            <person name="Harbers M."/>
            <person name="Hayashi Y."/>
            <person name="Hensch T.K."/>
            <person name="Hirokawa N."/>
            <person name="Hill D."/>
            <person name="Huminiecki L."/>
            <person name="Iacono M."/>
            <person name="Ikeo K."/>
            <person name="Iwama A."/>
            <person name="Ishikawa T."/>
            <person name="Jakt M."/>
            <person name="Kanapin A."/>
            <person name="Katoh M."/>
            <person name="Kawasawa Y."/>
            <person name="Kelso J."/>
            <person name="Kitamura H."/>
            <person name="Kitano H."/>
            <person name="Kollias G."/>
            <person name="Krishnan S.P."/>
            <person name="Kruger A."/>
            <person name="Kummerfeld S.K."/>
            <person name="Kurochkin I.V."/>
            <person name="Lareau L.F."/>
            <person name="Lazarevic D."/>
            <person name="Lipovich L."/>
            <person name="Liu J."/>
            <person name="Liuni S."/>
            <person name="McWilliam S."/>
            <person name="Madan Babu M."/>
            <person name="Madera M."/>
            <person name="Marchionni L."/>
            <person name="Matsuda H."/>
            <person name="Matsuzawa S."/>
            <person name="Miki H."/>
            <person name="Mignone F."/>
            <person name="Miyake S."/>
            <person name="Morris K."/>
            <person name="Mottagui-Tabar S."/>
            <person name="Mulder N."/>
            <person name="Nakano N."/>
            <person name="Nakauchi H."/>
            <person name="Ng P."/>
            <person name="Nilsson R."/>
            <person name="Nishiguchi S."/>
            <person name="Nishikawa S."/>
            <person name="Nori F."/>
            <person name="Ohara O."/>
            <person name="Okazaki Y."/>
            <person name="Orlando V."/>
            <person name="Pang K.C."/>
            <person name="Pavan W.J."/>
            <person name="Pavesi G."/>
            <person name="Pesole G."/>
            <person name="Petrovsky N."/>
            <person name="Piazza S."/>
            <person name="Reed J."/>
            <person name="Reid J.F."/>
            <person name="Ring B.Z."/>
            <person name="Ringwald M."/>
            <person name="Rost B."/>
            <person name="Ruan Y."/>
            <person name="Salzberg S.L."/>
            <person name="Sandelin A."/>
            <person name="Schneider C."/>
            <person name="Schoenbach C."/>
            <person name="Sekiguchi K."/>
            <person name="Semple C.A."/>
            <person name="Seno S."/>
            <person name="Sessa L."/>
            <person name="Sheng Y."/>
            <person name="Shibata Y."/>
            <person name="Shimada H."/>
            <person name="Shimada K."/>
            <person name="Silva D."/>
            <person name="Sinclair B."/>
            <person name="Sperling S."/>
            <person name="Stupka E."/>
            <person name="Sugiura K."/>
            <person name="Sultana R."/>
            <person name="Takenaka Y."/>
            <person name="Taki K."/>
            <person name="Tammoja K."/>
            <person name="Tan S.L."/>
            <person name="Tang S."/>
            <person name="Taylor M.S."/>
            <person name="Tegner J."/>
            <person name="Teichmann S.A."/>
            <person name="Ueda H.R."/>
            <person name="van Nimwegen E."/>
            <person name="Verardo R."/>
            <person name="Wei C.L."/>
            <person name="Yagi K."/>
            <person name="Yamanishi H."/>
            <person name="Zabarovsky E."/>
            <person name="Zhu S."/>
            <person name="Zimmer A."/>
            <person name="Hide W."/>
            <person name="Bult C."/>
            <person name="Grimmond S.M."/>
            <person name="Teasdale R.D."/>
            <person name="Liu E.T."/>
            <person name="Brusic V."/>
            <person name="Quackenbush J."/>
            <person name="Wahlestedt C."/>
            <person name="Mattick J.S."/>
            <person name="Hume D.A."/>
            <person name="Kai C."/>
            <person name="Sasaki D."/>
            <person name="Tomaru Y."/>
            <person name="Fukuda S."/>
            <person name="Kanamori-Katayama M."/>
            <person name="Suzuki M."/>
            <person name="Aoki J."/>
            <person name="Arakawa T."/>
            <person name="Iida J."/>
            <person name="Imamura K."/>
            <person name="Itoh M."/>
            <person name="Kato T."/>
            <person name="Kawaji H."/>
            <person name="Kawagashira N."/>
            <person name="Kawashima T."/>
            <person name="Kojima M."/>
            <person name="Kondo S."/>
            <person name="Konno H."/>
            <person name="Nakano K."/>
            <person name="Ninomiya N."/>
            <person name="Nishio T."/>
            <person name="Okada M."/>
            <person name="Plessy C."/>
            <person name="Shibata K."/>
            <person name="Shiraki T."/>
            <person name="Suzuki S."/>
            <person name="Tagami M."/>
            <person name="Waki K."/>
            <person name="Watahiki A."/>
            <person name="Okamura-Oho Y."/>
            <person name="Suzuki H."/>
            <person name="Kawai J."/>
            <person name="Hayashizaki Y."/>
        </authorList>
    </citation>
    <scope>NUCLEOTIDE SEQUENCE [LARGE SCALE MRNA]</scope>
    <source>
        <strain>C57BL/6J</strain>
        <tissue>Corpora quadrigemina</tissue>
    </source>
</reference>
<reference key="2">
    <citation type="journal article" date="2009" name="PLoS Biol.">
        <title>Lineage-specific biology revealed by a finished genome assembly of the mouse.</title>
        <authorList>
            <person name="Church D.M."/>
            <person name="Goodstadt L."/>
            <person name="Hillier L.W."/>
            <person name="Zody M.C."/>
            <person name="Goldstein S."/>
            <person name="She X."/>
            <person name="Bult C.J."/>
            <person name="Agarwala R."/>
            <person name="Cherry J.L."/>
            <person name="DiCuccio M."/>
            <person name="Hlavina W."/>
            <person name="Kapustin Y."/>
            <person name="Meric P."/>
            <person name="Maglott D."/>
            <person name="Birtle Z."/>
            <person name="Marques A.C."/>
            <person name="Graves T."/>
            <person name="Zhou S."/>
            <person name="Teague B."/>
            <person name="Potamousis K."/>
            <person name="Churas C."/>
            <person name="Place M."/>
            <person name="Herschleb J."/>
            <person name="Runnheim R."/>
            <person name="Forrest D."/>
            <person name="Amos-Landgraf J."/>
            <person name="Schwartz D.C."/>
            <person name="Cheng Z."/>
            <person name="Lindblad-Toh K."/>
            <person name="Eichler E.E."/>
            <person name="Ponting C.P."/>
        </authorList>
    </citation>
    <scope>NUCLEOTIDE SEQUENCE [LARGE SCALE GENOMIC DNA]</scope>
    <source>
        <strain>C57BL/6J</strain>
    </source>
</reference>
<reference key="3">
    <citation type="journal article" date="2004" name="Genome Res.">
        <title>The status, quality, and expansion of the NIH full-length cDNA project: the Mammalian Gene Collection (MGC).</title>
        <authorList>
            <consortium name="The MGC Project Team"/>
        </authorList>
    </citation>
    <scope>NUCLEOTIDE SEQUENCE [LARGE SCALE MRNA]</scope>
    <source>
        <strain>C57BL/6J</strain>
        <tissue>Eye</tissue>
    </source>
</reference>
<name>ZFP3_MOUSE</name>
<dbReference type="EMBL" id="AK045753">
    <property type="protein sequence ID" value="BAC32482.1"/>
    <property type="molecule type" value="mRNA"/>
</dbReference>
<dbReference type="EMBL" id="AL596117">
    <property type="status" value="NOT_ANNOTATED_CDS"/>
    <property type="molecule type" value="Genomic_DNA"/>
</dbReference>
<dbReference type="EMBL" id="BC096463">
    <property type="protein sequence ID" value="AAH96463.1"/>
    <property type="molecule type" value="mRNA"/>
</dbReference>
<dbReference type="CCDS" id="CCDS24966.1"/>
<dbReference type="RefSeq" id="NP_808233.1">
    <property type="nucleotide sequence ID" value="NM_177565.3"/>
</dbReference>
<dbReference type="SMR" id="Q8BLB0"/>
<dbReference type="BioGRID" id="228725">
    <property type="interactions" value="27"/>
</dbReference>
<dbReference type="STRING" id="10090.ENSMUSP00000054020"/>
<dbReference type="iPTMnet" id="Q8BLB0"/>
<dbReference type="PhosphoSitePlus" id="Q8BLB0"/>
<dbReference type="SwissPalm" id="Q8BLB0"/>
<dbReference type="jPOST" id="Q8BLB0"/>
<dbReference type="PaxDb" id="10090-ENSMUSP00000054020"/>
<dbReference type="ProteomicsDB" id="299547"/>
<dbReference type="Antibodypedia" id="23592">
    <property type="antibodies" value="39 antibodies from 13 providers"/>
</dbReference>
<dbReference type="DNASU" id="193043"/>
<dbReference type="Ensembl" id="ENSMUST00000060444.6">
    <property type="protein sequence ID" value="ENSMUSP00000054020.6"/>
    <property type="gene ID" value="ENSMUSG00000043602.6"/>
</dbReference>
<dbReference type="GeneID" id="193043"/>
<dbReference type="KEGG" id="mmu:193043"/>
<dbReference type="UCSC" id="uc007jwo.2">
    <property type="organism name" value="mouse"/>
</dbReference>
<dbReference type="AGR" id="MGI:99177"/>
<dbReference type="CTD" id="124961"/>
<dbReference type="MGI" id="MGI:99177">
    <property type="gene designation" value="Zfp3"/>
</dbReference>
<dbReference type="VEuPathDB" id="HostDB:ENSMUSG00000043602"/>
<dbReference type="eggNOG" id="KOG1721">
    <property type="taxonomic scope" value="Eukaryota"/>
</dbReference>
<dbReference type="GeneTree" id="ENSGT00940000162652"/>
<dbReference type="HOGENOM" id="CLU_002678_52_2_1"/>
<dbReference type="InParanoid" id="Q8BLB0"/>
<dbReference type="OMA" id="YHECSEC"/>
<dbReference type="OrthoDB" id="6591996at2759"/>
<dbReference type="PhylomeDB" id="Q8BLB0"/>
<dbReference type="TreeFam" id="TF337005"/>
<dbReference type="BioGRID-ORCS" id="193043">
    <property type="hits" value="4 hits in 77 CRISPR screens"/>
</dbReference>
<dbReference type="PRO" id="PR:Q8BLB0"/>
<dbReference type="Proteomes" id="UP000000589">
    <property type="component" value="Chromosome 11"/>
</dbReference>
<dbReference type="RNAct" id="Q8BLB0">
    <property type="molecule type" value="protein"/>
</dbReference>
<dbReference type="Bgee" id="ENSMUSG00000043602">
    <property type="expression patterns" value="Expressed in ureteric bud trunk and 154 other cell types or tissues"/>
</dbReference>
<dbReference type="GO" id="GO:0005634">
    <property type="term" value="C:nucleus"/>
    <property type="evidence" value="ECO:0007669"/>
    <property type="project" value="UniProtKB-SubCell"/>
</dbReference>
<dbReference type="GO" id="GO:0003677">
    <property type="term" value="F:DNA binding"/>
    <property type="evidence" value="ECO:0007669"/>
    <property type="project" value="UniProtKB-KW"/>
</dbReference>
<dbReference type="GO" id="GO:0008270">
    <property type="term" value="F:zinc ion binding"/>
    <property type="evidence" value="ECO:0007669"/>
    <property type="project" value="UniProtKB-KW"/>
</dbReference>
<dbReference type="FunFam" id="3.30.160.60:FF:001738">
    <property type="entry name" value="ZFP3 zinc finger protein"/>
    <property type="match status" value="1"/>
</dbReference>
<dbReference type="FunFam" id="3.30.160.60:FF:000478">
    <property type="entry name" value="Zinc finger protein 133"/>
    <property type="match status" value="1"/>
</dbReference>
<dbReference type="FunFam" id="3.30.160.60:FF:000295">
    <property type="entry name" value="zinc finger protein 19"/>
    <property type="match status" value="1"/>
</dbReference>
<dbReference type="FunFam" id="3.30.160.60:FF:000027">
    <property type="entry name" value="zinc finger protein 3 homolog"/>
    <property type="match status" value="1"/>
</dbReference>
<dbReference type="FunFam" id="3.30.160.60:FF:000352">
    <property type="entry name" value="zinc finger protein 3 homolog"/>
    <property type="match status" value="1"/>
</dbReference>
<dbReference type="FunFam" id="3.30.160.60:FF:001121">
    <property type="entry name" value="zinc finger protein 3 homolog"/>
    <property type="match status" value="1"/>
</dbReference>
<dbReference type="FunFam" id="3.30.160.60:FF:001542">
    <property type="entry name" value="zinc finger protein 3 homolog"/>
    <property type="match status" value="1"/>
</dbReference>
<dbReference type="FunFam" id="3.30.160.60:FF:000016">
    <property type="entry name" value="zinc finger protein 37 homolog"/>
    <property type="match status" value="1"/>
</dbReference>
<dbReference type="FunFam" id="3.30.160.60:FF:002254">
    <property type="entry name" value="Zinc finger protein 540"/>
    <property type="match status" value="1"/>
</dbReference>
<dbReference type="FunFam" id="3.30.160.60:FF:000737">
    <property type="entry name" value="Zinc finger protein 565"/>
    <property type="match status" value="2"/>
</dbReference>
<dbReference type="FunFam" id="3.30.160.60:FF:001697">
    <property type="entry name" value="zinc finger protein 623"/>
    <property type="match status" value="1"/>
</dbReference>
<dbReference type="FunFam" id="3.30.160.60:FF:000028">
    <property type="entry name" value="zinc finger protein 90 homolog"/>
    <property type="match status" value="1"/>
</dbReference>
<dbReference type="Gene3D" id="3.30.160.60">
    <property type="entry name" value="Classic Zinc Finger"/>
    <property type="match status" value="13"/>
</dbReference>
<dbReference type="InterPro" id="IPR050758">
    <property type="entry name" value="Znf_C2H2-type"/>
</dbReference>
<dbReference type="InterPro" id="IPR036236">
    <property type="entry name" value="Znf_C2H2_sf"/>
</dbReference>
<dbReference type="InterPro" id="IPR013087">
    <property type="entry name" value="Znf_C2H2_type"/>
</dbReference>
<dbReference type="PANTHER" id="PTHR23234:SF10">
    <property type="entry name" value="RIKEN CDNA 6720489N17 GENE-RELATED"/>
    <property type="match status" value="1"/>
</dbReference>
<dbReference type="PANTHER" id="PTHR23234">
    <property type="entry name" value="ZNF44 PROTEIN"/>
    <property type="match status" value="1"/>
</dbReference>
<dbReference type="Pfam" id="PF00096">
    <property type="entry name" value="zf-C2H2"/>
    <property type="match status" value="12"/>
</dbReference>
<dbReference type="SMART" id="SM00355">
    <property type="entry name" value="ZnF_C2H2"/>
    <property type="match status" value="13"/>
</dbReference>
<dbReference type="SUPFAM" id="SSF57667">
    <property type="entry name" value="beta-beta-alpha zinc fingers"/>
    <property type="match status" value="7"/>
</dbReference>
<dbReference type="PROSITE" id="PS00028">
    <property type="entry name" value="ZINC_FINGER_C2H2_1"/>
    <property type="match status" value="13"/>
</dbReference>
<dbReference type="PROSITE" id="PS50157">
    <property type="entry name" value="ZINC_FINGER_C2H2_2"/>
    <property type="match status" value="13"/>
</dbReference>
<feature type="chain" id="PRO_0000233714" description="Zinc finger protein 3">
    <location>
        <begin position="1"/>
        <end position="497"/>
    </location>
</feature>
<feature type="zinc finger region" description="C2H2-type 1" evidence="2">
    <location>
        <begin position="136"/>
        <end position="158"/>
    </location>
</feature>
<feature type="zinc finger region" description="C2H2-type 2" evidence="2">
    <location>
        <begin position="164"/>
        <end position="186"/>
    </location>
</feature>
<feature type="zinc finger region" description="C2H2-type 3" evidence="2">
    <location>
        <begin position="192"/>
        <end position="214"/>
    </location>
</feature>
<feature type="zinc finger region" description="C2H2-type 4" evidence="2">
    <location>
        <begin position="220"/>
        <end position="242"/>
    </location>
</feature>
<feature type="zinc finger region" description="C2H2-type 5" evidence="2">
    <location>
        <begin position="248"/>
        <end position="270"/>
    </location>
</feature>
<feature type="zinc finger region" description="C2H2-type 6" evidence="2">
    <location>
        <begin position="276"/>
        <end position="298"/>
    </location>
</feature>
<feature type="zinc finger region" description="C2H2-type 7" evidence="2">
    <location>
        <begin position="304"/>
        <end position="326"/>
    </location>
</feature>
<feature type="zinc finger region" description="C2H2-type 8" evidence="2">
    <location>
        <begin position="332"/>
        <end position="354"/>
    </location>
</feature>
<feature type="zinc finger region" description="C2H2-type 9" evidence="2">
    <location>
        <begin position="360"/>
        <end position="382"/>
    </location>
</feature>
<feature type="zinc finger region" description="C2H2-type 10" evidence="2">
    <location>
        <begin position="388"/>
        <end position="410"/>
    </location>
</feature>
<feature type="zinc finger region" description="C2H2-type 11" evidence="2">
    <location>
        <begin position="416"/>
        <end position="438"/>
    </location>
</feature>
<feature type="zinc finger region" description="C2H2-type 12" evidence="2">
    <location>
        <begin position="444"/>
        <end position="466"/>
    </location>
</feature>
<feature type="zinc finger region" description="C2H2-type 13" evidence="2">
    <location>
        <begin position="472"/>
        <end position="494"/>
    </location>
</feature>
<feature type="region of interest" description="Disordered" evidence="3">
    <location>
        <begin position="1"/>
        <end position="53"/>
    </location>
</feature>
<feature type="compositionally biased region" description="Basic and acidic residues" evidence="3">
    <location>
        <begin position="1"/>
        <end position="20"/>
    </location>
</feature>
<feature type="cross-link" description="Glycyl lysine isopeptide (Lys-Gly) (interchain with G-Cter in SUMO2)" evidence="1">
    <location>
        <position position="6"/>
    </location>
</feature>
<feature type="cross-link" description="Glycyl lysine isopeptide (Lys-Gly) (interchain with G-Cter in SUMO2)" evidence="1">
    <location>
        <position position="11"/>
    </location>
</feature>
<keyword id="KW-0238">DNA-binding</keyword>
<keyword id="KW-1017">Isopeptide bond</keyword>
<keyword id="KW-0479">Metal-binding</keyword>
<keyword id="KW-0539">Nucleus</keyword>
<keyword id="KW-1185">Reference proteome</keyword>
<keyword id="KW-0677">Repeat</keyword>
<keyword id="KW-0804">Transcription</keyword>
<keyword id="KW-0805">Transcription regulation</keyword>
<keyword id="KW-0832">Ubl conjugation</keyword>
<keyword id="KW-0862">Zinc</keyword>
<keyword id="KW-0863">Zinc-finger</keyword>
<sequence>MGTEKKEGLPKEETSEDSKPHGQTVEKLAQEVCHGHEFGEASEEDMSEGHLRESSKEIIEKRYPQERHFASGLLIFKKSSSGEKTSENPRGFNPNPSVLCHGGAERASACAASGHNCLGSIELTKAQGPPVGEKPHTCKECGKAFNQNSHLIQHMRVHSGEKPFECKECGKTFGTNSSLRRHQRIHAGEKPFACTECGKAFIQSSHLIHHHRIHTGERPYKCEECGKAFSQNSALILHQRIHTGEKPYECNECGKTFRVSSQLIQHQRIHTEERYHECSECGKAFKHSSGLIRHQKIHTGEKPYLCNECGKGFGQSSELIRHQRIHTGDKPYECSECGKTFGQNSEIIRHIRIHTGEKPYVCKECGKAFRGNSELLRHERIHTGEKPYECFECGKAFRRTSHLIVHQRIHTGEKPHQCNECARTFWDNSELLLHQKIHIGEKPYECSECEKTFSQHSQLTIHQRIHTGEKPYECQECQKTFSRSSHLLRHQSVHCSE</sequence>